<name>RF1_CERS1</name>
<accession>A3PJZ6</accession>
<evidence type="ECO:0000255" key="1">
    <source>
        <dbReference type="HAMAP-Rule" id="MF_00093"/>
    </source>
</evidence>
<comment type="function">
    <text evidence="1">Peptide chain release factor 1 directs the termination of translation in response to the peptide chain termination codons UAG and UAA.</text>
</comment>
<comment type="subcellular location">
    <subcellularLocation>
        <location evidence="1">Cytoplasm</location>
    </subcellularLocation>
</comment>
<comment type="PTM">
    <text evidence="1">Methylated by PrmC. Methylation increases the termination efficiency of RF1.</text>
</comment>
<comment type="similarity">
    <text evidence="1">Belongs to the prokaryotic/mitochondrial release factor family.</text>
</comment>
<keyword id="KW-0963">Cytoplasm</keyword>
<keyword id="KW-0488">Methylation</keyword>
<keyword id="KW-0648">Protein biosynthesis</keyword>
<gene>
    <name evidence="1" type="primary">prfA</name>
    <name type="ordered locus">Rsph17029_1552</name>
</gene>
<sequence length="351" mass="38567">MVPMDRLLQIVRRFEFLEARLSAGAAPAEIAALSREYAELKPVVAEISAYRTALEDLAEAEAMLSDPEMRALAEDEIPALRARIPGMEQALRLALLPKDAADARPAILEIRPGTGGEEAALFAGDLLRMYQRYAEGQGWRFELLDLAPSELGGIREATARVEGEGAFARLKYESGVHRVQRVPETEAQGRIHTSAATVAVLPEAEEVDLEIPAADIRIDTMRSSGAGGQHVNTTDSAVRITHLPTGIIVTSSEKSQHRNREIAMQVLRARLYDLERQRLADARSADRKAQVGSGDRSERIRTYNFPQGRMTDHRINLTLYALPQIMAGDLSEVISALTAHDQAARLAEMEA</sequence>
<protein>
    <recommendedName>
        <fullName evidence="1">Peptide chain release factor 1</fullName>
        <shortName evidence="1">RF-1</shortName>
    </recommendedName>
</protein>
<reference key="1">
    <citation type="submission" date="2007-02" db="EMBL/GenBank/DDBJ databases">
        <title>Complete sequence of chromosome 1 of Rhodobacter sphaeroides ATCC 17029.</title>
        <authorList>
            <person name="Copeland A."/>
            <person name="Lucas S."/>
            <person name="Lapidus A."/>
            <person name="Barry K."/>
            <person name="Detter J.C."/>
            <person name="Glavina del Rio T."/>
            <person name="Hammon N."/>
            <person name="Israni S."/>
            <person name="Dalin E."/>
            <person name="Tice H."/>
            <person name="Pitluck S."/>
            <person name="Kiss H."/>
            <person name="Brettin T."/>
            <person name="Bruce D."/>
            <person name="Han C."/>
            <person name="Tapia R."/>
            <person name="Gilna P."/>
            <person name="Schmutz J."/>
            <person name="Larimer F."/>
            <person name="Land M."/>
            <person name="Hauser L."/>
            <person name="Kyrpides N."/>
            <person name="Mikhailova N."/>
            <person name="Richardson P."/>
            <person name="Mackenzie C."/>
            <person name="Choudhary M."/>
            <person name="Donohue T.J."/>
            <person name="Kaplan S."/>
        </authorList>
    </citation>
    <scope>NUCLEOTIDE SEQUENCE [LARGE SCALE GENOMIC DNA]</scope>
    <source>
        <strain>ATCC 17029 / ATH 2.4.9</strain>
    </source>
</reference>
<organism>
    <name type="scientific">Cereibacter sphaeroides (strain ATCC 17029 / ATH 2.4.9)</name>
    <name type="common">Rhodobacter sphaeroides</name>
    <dbReference type="NCBI Taxonomy" id="349101"/>
    <lineage>
        <taxon>Bacteria</taxon>
        <taxon>Pseudomonadati</taxon>
        <taxon>Pseudomonadota</taxon>
        <taxon>Alphaproteobacteria</taxon>
        <taxon>Rhodobacterales</taxon>
        <taxon>Paracoccaceae</taxon>
        <taxon>Cereibacter</taxon>
    </lineage>
</organism>
<feature type="chain" id="PRO_1000004939" description="Peptide chain release factor 1">
    <location>
        <begin position="1"/>
        <end position="351"/>
    </location>
</feature>
<feature type="modified residue" description="N5-methylglutamine" evidence="1">
    <location>
        <position position="229"/>
    </location>
</feature>
<dbReference type="EMBL" id="CP000577">
    <property type="protein sequence ID" value="ABN76662.1"/>
    <property type="molecule type" value="Genomic_DNA"/>
</dbReference>
<dbReference type="RefSeq" id="WP_011841095.1">
    <property type="nucleotide sequence ID" value="NC_009049.1"/>
</dbReference>
<dbReference type="SMR" id="A3PJZ6"/>
<dbReference type="KEGG" id="rsh:Rsph17029_1552"/>
<dbReference type="HOGENOM" id="CLU_036856_0_1_5"/>
<dbReference type="GO" id="GO:0005737">
    <property type="term" value="C:cytoplasm"/>
    <property type="evidence" value="ECO:0007669"/>
    <property type="project" value="UniProtKB-SubCell"/>
</dbReference>
<dbReference type="GO" id="GO:0016149">
    <property type="term" value="F:translation release factor activity, codon specific"/>
    <property type="evidence" value="ECO:0007669"/>
    <property type="project" value="UniProtKB-UniRule"/>
</dbReference>
<dbReference type="FunFam" id="3.30.160.20:FF:000004">
    <property type="entry name" value="Peptide chain release factor 1"/>
    <property type="match status" value="1"/>
</dbReference>
<dbReference type="FunFam" id="3.30.70.1660:FF:000002">
    <property type="entry name" value="Peptide chain release factor 1"/>
    <property type="match status" value="1"/>
</dbReference>
<dbReference type="FunFam" id="3.30.70.1660:FF:000004">
    <property type="entry name" value="Peptide chain release factor 1"/>
    <property type="match status" value="1"/>
</dbReference>
<dbReference type="Gene3D" id="3.30.160.20">
    <property type="match status" value="1"/>
</dbReference>
<dbReference type="Gene3D" id="3.30.70.1660">
    <property type="match status" value="1"/>
</dbReference>
<dbReference type="Gene3D" id="6.10.140.1950">
    <property type="match status" value="1"/>
</dbReference>
<dbReference type="HAMAP" id="MF_00093">
    <property type="entry name" value="Rel_fac_1"/>
    <property type="match status" value="1"/>
</dbReference>
<dbReference type="InterPro" id="IPR005139">
    <property type="entry name" value="PCRF"/>
</dbReference>
<dbReference type="InterPro" id="IPR000352">
    <property type="entry name" value="Pep_chain_release_fac_I"/>
</dbReference>
<dbReference type="InterPro" id="IPR045853">
    <property type="entry name" value="Pep_chain_release_fac_I_sf"/>
</dbReference>
<dbReference type="InterPro" id="IPR050057">
    <property type="entry name" value="Prokaryotic/Mito_RF"/>
</dbReference>
<dbReference type="InterPro" id="IPR004373">
    <property type="entry name" value="RF-1"/>
</dbReference>
<dbReference type="NCBIfam" id="TIGR00019">
    <property type="entry name" value="prfA"/>
    <property type="match status" value="1"/>
</dbReference>
<dbReference type="NCBIfam" id="NF001859">
    <property type="entry name" value="PRK00591.1"/>
    <property type="match status" value="1"/>
</dbReference>
<dbReference type="PANTHER" id="PTHR43804">
    <property type="entry name" value="LD18447P"/>
    <property type="match status" value="1"/>
</dbReference>
<dbReference type="PANTHER" id="PTHR43804:SF7">
    <property type="entry name" value="LD18447P"/>
    <property type="match status" value="1"/>
</dbReference>
<dbReference type="Pfam" id="PF03462">
    <property type="entry name" value="PCRF"/>
    <property type="match status" value="1"/>
</dbReference>
<dbReference type="Pfam" id="PF00472">
    <property type="entry name" value="RF-1"/>
    <property type="match status" value="1"/>
</dbReference>
<dbReference type="SMART" id="SM00937">
    <property type="entry name" value="PCRF"/>
    <property type="match status" value="1"/>
</dbReference>
<dbReference type="SUPFAM" id="SSF75620">
    <property type="entry name" value="Release factor"/>
    <property type="match status" value="1"/>
</dbReference>
<dbReference type="PROSITE" id="PS00745">
    <property type="entry name" value="RF_PROK_I"/>
    <property type="match status" value="1"/>
</dbReference>
<proteinExistence type="inferred from homology"/>